<dbReference type="EMBL" id="CP000036">
    <property type="protein sequence ID" value="ABB68081.1"/>
    <property type="molecule type" value="Genomic_DNA"/>
</dbReference>
<dbReference type="RefSeq" id="WP_000517100.1">
    <property type="nucleotide sequence ID" value="NC_007613.1"/>
</dbReference>
<dbReference type="SMR" id="Q31V27"/>
<dbReference type="GeneID" id="93778313"/>
<dbReference type="KEGG" id="sbo:SBO_3600"/>
<dbReference type="HOGENOM" id="CLU_185147_0_0_6"/>
<dbReference type="Proteomes" id="UP000007067">
    <property type="component" value="Chromosome"/>
</dbReference>
<protein>
    <recommendedName>
        <fullName>Uncharacterized protein YibT</fullName>
    </recommendedName>
</protein>
<feature type="chain" id="PRO_0000263021" description="Uncharacterized protein YibT">
    <location>
        <begin position="1"/>
        <end position="69"/>
    </location>
</feature>
<gene>
    <name type="primary">yibT</name>
    <name type="ordered locus">SBO_3600</name>
</gene>
<reference key="1">
    <citation type="journal article" date="2005" name="Nucleic Acids Res.">
        <title>Genome dynamics and diversity of Shigella species, the etiologic agents of bacillary dysentery.</title>
        <authorList>
            <person name="Yang F."/>
            <person name="Yang J."/>
            <person name="Zhang X."/>
            <person name="Chen L."/>
            <person name="Jiang Y."/>
            <person name="Yan Y."/>
            <person name="Tang X."/>
            <person name="Wang J."/>
            <person name="Xiong Z."/>
            <person name="Dong J."/>
            <person name="Xue Y."/>
            <person name="Zhu Y."/>
            <person name="Xu X."/>
            <person name="Sun L."/>
            <person name="Chen S."/>
            <person name="Nie H."/>
            <person name="Peng J."/>
            <person name="Xu J."/>
            <person name="Wang Y."/>
            <person name="Yuan Z."/>
            <person name="Wen Y."/>
            <person name="Yao Z."/>
            <person name="Shen Y."/>
            <person name="Qiang B."/>
            <person name="Hou Y."/>
            <person name="Yu J."/>
            <person name="Jin Q."/>
        </authorList>
    </citation>
    <scope>NUCLEOTIDE SEQUENCE [LARGE SCALE GENOMIC DNA]</scope>
    <source>
        <strain>Sb227</strain>
    </source>
</reference>
<sequence length="69" mass="7995">MGKLGENVPLLIDKAVDFMASSQAFREYLKKLPPRNAIPSGIPDESVPLYLQRLEYYRRLYRPKQVEGQ</sequence>
<proteinExistence type="predicted"/>
<accession>Q31V27</accession>
<organism>
    <name type="scientific">Shigella boydii serotype 4 (strain Sb227)</name>
    <dbReference type="NCBI Taxonomy" id="300268"/>
    <lineage>
        <taxon>Bacteria</taxon>
        <taxon>Pseudomonadati</taxon>
        <taxon>Pseudomonadota</taxon>
        <taxon>Gammaproteobacteria</taxon>
        <taxon>Enterobacterales</taxon>
        <taxon>Enterobacteriaceae</taxon>
        <taxon>Shigella</taxon>
    </lineage>
</organism>
<name>YIBT_SHIBS</name>